<proteinExistence type="inferred from homology"/>
<organism>
    <name type="scientific">Mycobacterium tuberculosis (strain CDC 1551 / Oshkosh)</name>
    <dbReference type="NCBI Taxonomy" id="83331"/>
    <lineage>
        <taxon>Bacteria</taxon>
        <taxon>Bacillati</taxon>
        <taxon>Actinomycetota</taxon>
        <taxon>Actinomycetes</taxon>
        <taxon>Mycobacteriales</taxon>
        <taxon>Mycobacteriaceae</taxon>
        <taxon>Mycobacterium</taxon>
        <taxon>Mycobacterium tuberculosis complex</taxon>
    </lineage>
</organism>
<evidence type="ECO:0000305" key="1"/>
<comment type="similarity">
    <text evidence="1">Belongs to the mycobacterial PPE family.</text>
</comment>
<protein>
    <recommendedName>
        <fullName>Uncharacterized PPE family protein PPE22</fullName>
    </recommendedName>
</protein>
<dbReference type="EMBL" id="AE000516">
    <property type="protein sequence ID" value="AAK46014.1"/>
    <property type="molecule type" value="Genomic_DNA"/>
</dbReference>
<dbReference type="PIR" id="H70503">
    <property type="entry name" value="H70503"/>
</dbReference>
<dbReference type="RefSeq" id="WP_003917515.1">
    <property type="nucleotide sequence ID" value="NZ_KK341227.1"/>
</dbReference>
<dbReference type="SMR" id="P9WI18"/>
<dbReference type="KEGG" id="mtc:MT1745"/>
<dbReference type="PATRIC" id="fig|83331.31.peg.1873"/>
<dbReference type="HOGENOM" id="CLU_000243_0_1_11"/>
<dbReference type="Proteomes" id="UP000001020">
    <property type="component" value="Chromosome"/>
</dbReference>
<dbReference type="GO" id="GO:0052572">
    <property type="term" value="P:response to host immune response"/>
    <property type="evidence" value="ECO:0007669"/>
    <property type="project" value="TreeGrafter"/>
</dbReference>
<dbReference type="FunFam" id="1.20.1260.20:FF:000001">
    <property type="entry name" value="PPE family protein PPE41"/>
    <property type="match status" value="1"/>
</dbReference>
<dbReference type="Gene3D" id="1.20.1260.20">
    <property type="entry name" value="PPE superfamily"/>
    <property type="match status" value="1"/>
</dbReference>
<dbReference type="InterPro" id="IPR022171">
    <property type="entry name" value="PPE_C"/>
</dbReference>
<dbReference type="InterPro" id="IPR000030">
    <property type="entry name" value="PPE_dom"/>
</dbReference>
<dbReference type="InterPro" id="IPR038332">
    <property type="entry name" value="PPE_sf"/>
</dbReference>
<dbReference type="PANTHER" id="PTHR46766">
    <property type="entry name" value="GLUTAMINE-RICH PROTEIN 2"/>
    <property type="match status" value="1"/>
</dbReference>
<dbReference type="PANTHER" id="PTHR46766:SF1">
    <property type="entry name" value="GLUTAMINE-RICH PROTEIN 2"/>
    <property type="match status" value="1"/>
</dbReference>
<dbReference type="Pfam" id="PF00823">
    <property type="entry name" value="PPE"/>
    <property type="match status" value="1"/>
</dbReference>
<dbReference type="Pfam" id="PF12484">
    <property type="entry name" value="PPE-SVP"/>
    <property type="match status" value="1"/>
</dbReference>
<dbReference type="SUPFAM" id="SSF140459">
    <property type="entry name" value="PE/PPE dimer-like"/>
    <property type="match status" value="1"/>
</dbReference>
<sequence>MDFGALPPEVNSGRMYCGPGSAPMVAAASAWNGLAAELSVAAVGYERVITTLQTEEWLGPASTLMVEAVAPYVAWMRATAIQAEQAASQARAAAAAYETAFAAIVPPPLIAANRARLTSLVTHNVFGQNTASIAATEAQYAEMWAQDAMAMYGYAGSSATATKVTPFAPPPNTTSPSAAATQLSAVAKAAGTSAGAAQSAIAELIAHLPNTLLGLTSPLSSALTAAATPGWLEWFINWYLPISQLFYNTVGLPYFAIGIGNSLITSWRALGWIGPEAAEAAAAAPAAVGAAVGGTGPVSAGLGNAATIGKLSLPPNWAGASPSLAPTVGSASAPLVSDIVEQPEAGAAGNLLGGMPLAGSGTGMGGAGPRYGFRVTVMSRPPFAG</sequence>
<reference key="1">
    <citation type="journal article" date="2002" name="J. Bacteriol.">
        <title>Whole-genome comparison of Mycobacterium tuberculosis clinical and laboratory strains.</title>
        <authorList>
            <person name="Fleischmann R.D."/>
            <person name="Alland D."/>
            <person name="Eisen J.A."/>
            <person name="Carpenter L."/>
            <person name="White O."/>
            <person name="Peterson J.D."/>
            <person name="DeBoy R.T."/>
            <person name="Dodson R.J."/>
            <person name="Gwinn M.L."/>
            <person name="Haft D.H."/>
            <person name="Hickey E.K."/>
            <person name="Kolonay J.F."/>
            <person name="Nelson W.C."/>
            <person name="Umayam L.A."/>
            <person name="Ermolaeva M.D."/>
            <person name="Salzberg S.L."/>
            <person name="Delcher A."/>
            <person name="Utterback T.R."/>
            <person name="Weidman J.F."/>
            <person name="Khouri H.M."/>
            <person name="Gill J."/>
            <person name="Mikula A."/>
            <person name="Bishai W."/>
            <person name="Jacobs W.R. Jr."/>
            <person name="Venter J.C."/>
            <person name="Fraser C.M."/>
        </authorList>
    </citation>
    <scope>NUCLEOTIDE SEQUENCE [LARGE SCALE GENOMIC DNA]</scope>
    <source>
        <strain>CDC 1551 / Oshkosh</strain>
    </source>
</reference>
<gene>
    <name type="primary">PPE22</name>
    <name type="ordered locus">MT1745</name>
</gene>
<feature type="chain" id="PRO_0000428084" description="Uncharacterized PPE family protein PPE22">
    <location>
        <begin position="1"/>
        <end position="385"/>
    </location>
</feature>
<name>PPE22_MYCTO</name>
<keyword id="KW-1185">Reference proteome</keyword>
<accession>P9WI18</accession>
<accession>L0T914</accession>
<accession>Q79FL6</accession>
<accession>Q8VJZ0</accession>